<dbReference type="EMBL" id="U20939">
    <property type="protein sequence ID" value="AAB67511.1"/>
    <property type="molecule type" value="Genomic_DNA"/>
</dbReference>
<dbReference type="EMBL" id="AY558321">
    <property type="protein sequence ID" value="AAS56647.1"/>
    <property type="molecule type" value="Genomic_DNA"/>
</dbReference>
<dbReference type="EMBL" id="BK006945">
    <property type="protein sequence ID" value="DAA09723.1"/>
    <property type="molecule type" value="Genomic_DNA"/>
</dbReference>
<dbReference type="PIR" id="S69319">
    <property type="entry name" value="S69319"/>
</dbReference>
<dbReference type="RefSeq" id="NP_013525.3">
    <molecule id="O13563-1"/>
    <property type="nucleotide sequence ID" value="NM_001182309.3"/>
</dbReference>
<dbReference type="PDB" id="2Z4D">
    <property type="method" value="NMR"/>
    <property type="chains" value="A=6-101"/>
</dbReference>
<dbReference type="PDB" id="3JCO">
    <property type="method" value="EM"/>
    <property type="resolution" value="4.80 A"/>
    <property type="chains" value="X=1-156"/>
</dbReference>
<dbReference type="PDB" id="3JCP">
    <property type="method" value="EM"/>
    <property type="resolution" value="4.60 A"/>
    <property type="chains" value="X=1-156"/>
</dbReference>
<dbReference type="PDB" id="4CR2">
    <property type="method" value="EM"/>
    <property type="resolution" value="7.70 A"/>
    <property type="chains" value="X=1-156"/>
</dbReference>
<dbReference type="PDB" id="4CR3">
    <property type="method" value="EM"/>
    <property type="resolution" value="9.30 A"/>
    <property type="chains" value="X=1-156"/>
</dbReference>
<dbReference type="PDB" id="4CR4">
    <property type="method" value="EM"/>
    <property type="resolution" value="8.80 A"/>
    <property type="chains" value="X=1-156"/>
</dbReference>
<dbReference type="PDB" id="5A5B">
    <property type="method" value="EM"/>
    <property type="resolution" value="9.50 A"/>
    <property type="chains" value="X=1-156"/>
</dbReference>
<dbReference type="PDB" id="5MPB">
    <property type="method" value="EM"/>
    <property type="resolution" value="7.80 A"/>
    <property type="chains" value="X=1-156"/>
</dbReference>
<dbReference type="PDB" id="5MPC">
    <property type="method" value="EM"/>
    <property type="resolution" value="7.70 A"/>
    <property type="chains" value="X=1-156"/>
</dbReference>
<dbReference type="PDB" id="5MPD">
    <property type="method" value="EM"/>
    <property type="resolution" value="4.10 A"/>
    <property type="chains" value="X=1-156"/>
</dbReference>
<dbReference type="PDB" id="5MPE">
    <property type="method" value="EM"/>
    <property type="resolution" value="4.50 A"/>
    <property type="chains" value="X=1-156"/>
</dbReference>
<dbReference type="PDB" id="5WVI">
    <property type="method" value="EM"/>
    <property type="resolution" value="6.30 A"/>
    <property type="chains" value="X=1-156"/>
</dbReference>
<dbReference type="PDB" id="5WVK">
    <property type="method" value="EM"/>
    <property type="resolution" value="4.20 A"/>
    <property type="chains" value="X=1-156"/>
</dbReference>
<dbReference type="PDB" id="6FVT">
    <property type="method" value="EM"/>
    <property type="resolution" value="4.10 A"/>
    <property type="chains" value="X=7-133"/>
</dbReference>
<dbReference type="PDB" id="6FVU">
    <property type="method" value="EM"/>
    <property type="resolution" value="4.50 A"/>
    <property type="chains" value="X=7-133"/>
</dbReference>
<dbReference type="PDB" id="6FVV">
    <property type="method" value="EM"/>
    <property type="resolution" value="5.40 A"/>
    <property type="chains" value="X=7-133"/>
</dbReference>
<dbReference type="PDB" id="6FVW">
    <property type="method" value="EM"/>
    <property type="resolution" value="4.50 A"/>
    <property type="chains" value="X=7-133"/>
</dbReference>
<dbReference type="PDB" id="6FVX">
    <property type="method" value="EM"/>
    <property type="resolution" value="4.90 A"/>
    <property type="chains" value="X=7-133"/>
</dbReference>
<dbReference type="PDB" id="6FVY">
    <property type="method" value="EM"/>
    <property type="resolution" value="6.10 A"/>
    <property type="chains" value="X=7-133"/>
</dbReference>
<dbReference type="PDB" id="6J2C">
    <property type="method" value="EM"/>
    <property type="resolution" value="7.00 A"/>
    <property type="chains" value="X=1-156"/>
</dbReference>
<dbReference type="PDB" id="6J2N">
    <property type="method" value="EM"/>
    <property type="resolution" value="7.50 A"/>
    <property type="chains" value="X=1-156"/>
</dbReference>
<dbReference type="PDB" id="6J2Q">
    <property type="method" value="EM"/>
    <property type="resolution" value="3.80 A"/>
    <property type="chains" value="X=1-156"/>
</dbReference>
<dbReference type="PDB" id="6J2X">
    <property type="method" value="EM"/>
    <property type="resolution" value="3.80 A"/>
    <property type="chains" value="X=1-156"/>
</dbReference>
<dbReference type="PDB" id="6J30">
    <property type="method" value="EM"/>
    <property type="resolution" value="4.50 A"/>
    <property type="chains" value="X=1-156"/>
</dbReference>
<dbReference type="PDB" id="7QO3">
    <property type="method" value="EM"/>
    <property type="resolution" value="6.10 A"/>
    <property type="chains" value="X=1-156"/>
</dbReference>
<dbReference type="PDB" id="7QO5">
    <property type="method" value="EM"/>
    <property type="resolution" value="6.00 A"/>
    <property type="chains" value="X=1-156"/>
</dbReference>
<dbReference type="PDBsum" id="2Z4D"/>
<dbReference type="PDBsum" id="3JCO"/>
<dbReference type="PDBsum" id="3JCP"/>
<dbReference type="PDBsum" id="4CR2"/>
<dbReference type="PDBsum" id="4CR3"/>
<dbReference type="PDBsum" id="4CR4"/>
<dbReference type="PDBsum" id="5A5B"/>
<dbReference type="PDBsum" id="5MPB"/>
<dbReference type="PDBsum" id="5MPC"/>
<dbReference type="PDBsum" id="5MPD"/>
<dbReference type="PDBsum" id="5MPE"/>
<dbReference type="PDBsum" id="5WVI"/>
<dbReference type="PDBsum" id="5WVK"/>
<dbReference type="PDBsum" id="6FVT"/>
<dbReference type="PDBsum" id="6FVU"/>
<dbReference type="PDBsum" id="6FVV"/>
<dbReference type="PDBsum" id="6FVW"/>
<dbReference type="PDBsum" id="6FVX"/>
<dbReference type="PDBsum" id="6FVY"/>
<dbReference type="PDBsum" id="6J2C"/>
<dbReference type="PDBsum" id="6J2N"/>
<dbReference type="PDBsum" id="6J2Q"/>
<dbReference type="PDBsum" id="6J2X"/>
<dbReference type="PDBsum" id="6J30"/>
<dbReference type="PDBsum" id="7QO3"/>
<dbReference type="PDBsum" id="7QO5"/>
<dbReference type="EMDB" id="EMD-14082"/>
<dbReference type="EMDB" id="EMD-14084"/>
<dbReference type="EMDB" id="EMD-2594"/>
<dbReference type="EMDB" id="EMD-2595"/>
<dbReference type="EMDB" id="EMD-2596"/>
<dbReference type="EMDB" id="EMD-3034"/>
<dbReference type="EMDB" id="EMD-3536"/>
<dbReference type="EMDB" id="EMD-3537"/>
<dbReference type="EMDB" id="EMD-4321"/>
<dbReference type="EMDB" id="EMD-4322"/>
<dbReference type="EMDB" id="EMD-4323"/>
<dbReference type="EMDB" id="EMD-4324"/>
<dbReference type="EMDB" id="EMD-6574"/>
<dbReference type="EMDB" id="EMD-6575"/>
<dbReference type="EMDB" id="EMD-6693"/>
<dbReference type="EMDB" id="EMD-6694"/>
<dbReference type="EMDB" id="EMD-9769"/>
<dbReference type="EMDB" id="EMD-9770"/>
<dbReference type="EMDB" id="EMD-9771"/>
<dbReference type="EMDB" id="EMD-9772"/>
<dbReference type="EMDB" id="EMD-9773"/>
<dbReference type="SMR" id="O13563"/>
<dbReference type="BioGRID" id="31680">
    <property type="interactions" value="131"/>
</dbReference>
<dbReference type="ComplexPortal" id="CPX-2262">
    <property type="entry name" value="26S proteasome complex"/>
</dbReference>
<dbReference type="DIP" id="DIP-4637N"/>
<dbReference type="FunCoup" id="O13563">
    <property type="interactions" value="273"/>
</dbReference>
<dbReference type="IntAct" id="O13563">
    <property type="interactions" value="54"/>
</dbReference>
<dbReference type="MINT" id="O13563"/>
<dbReference type="STRING" id="4932.YLR421C"/>
<dbReference type="iPTMnet" id="O13563"/>
<dbReference type="PaxDb" id="4932-YLR421C"/>
<dbReference type="PeptideAtlas" id="O13563"/>
<dbReference type="EnsemblFungi" id="YLR421C_mRNA">
    <molecule id="O13563-1"/>
    <property type="protein sequence ID" value="YLR421C"/>
    <property type="gene ID" value="YLR421C"/>
</dbReference>
<dbReference type="GeneID" id="851140"/>
<dbReference type="KEGG" id="sce:YLR421C"/>
<dbReference type="AGR" id="SGD:S000004413"/>
<dbReference type="SGD" id="S000004413">
    <property type="gene designation" value="RPN13"/>
</dbReference>
<dbReference type="VEuPathDB" id="FungiDB:YLR421C"/>
<dbReference type="eggNOG" id="KOG3037">
    <property type="taxonomic scope" value="Eukaryota"/>
</dbReference>
<dbReference type="GeneTree" id="ENSGT00390000013839"/>
<dbReference type="HOGENOM" id="CLU_115505_0_0_1"/>
<dbReference type="InParanoid" id="O13563"/>
<dbReference type="OMA" id="IPGETMW"/>
<dbReference type="OrthoDB" id="340431at2759"/>
<dbReference type="BioCyc" id="YEAST:G3O-32481-MONOMER"/>
<dbReference type="BioGRID-ORCS" id="851140">
    <property type="hits" value="0 hits in 10 CRISPR screens"/>
</dbReference>
<dbReference type="EvolutionaryTrace" id="O13563"/>
<dbReference type="PRO" id="PR:O13563"/>
<dbReference type="Proteomes" id="UP000002311">
    <property type="component" value="Chromosome XII"/>
</dbReference>
<dbReference type="RNAct" id="O13563">
    <property type="molecule type" value="protein"/>
</dbReference>
<dbReference type="GO" id="GO:0005634">
    <property type="term" value="C:nucleus"/>
    <property type="evidence" value="ECO:0007669"/>
    <property type="project" value="UniProtKB-SubCell"/>
</dbReference>
<dbReference type="GO" id="GO:0000502">
    <property type="term" value="C:proteasome complex"/>
    <property type="evidence" value="ECO:0000353"/>
    <property type="project" value="ComplexPortal"/>
</dbReference>
<dbReference type="GO" id="GO:0008541">
    <property type="term" value="C:proteasome regulatory particle, lid subcomplex"/>
    <property type="evidence" value="ECO:0000314"/>
    <property type="project" value="SGD"/>
</dbReference>
<dbReference type="GO" id="GO:0034515">
    <property type="term" value="C:proteasome storage granule"/>
    <property type="evidence" value="ECO:0000314"/>
    <property type="project" value="SGD"/>
</dbReference>
<dbReference type="GO" id="GO:0043130">
    <property type="term" value="F:ubiquitin binding"/>
    <property type="evidence" value="ECO:0000314"/>
    <property type="project" value="SGD"/>
</dbReference>
<dbReference type="GO" id="GO:0043161">
    <property type="term" value="P:proteasome-mediated ubiquitin-dependent protein catabolic process"/>
    <property type="evidence" value="ECO:0000314"/>
    <property type="project" value="ComplexPortal"/>
</dbReference>
<dbReference type="GO" id="GO:0006511">
    <property type="term" value="P:ubiquitin-dependent protein catabolic process"/>
    <property type="evidence" value="ECO:0000315"/>
    <property type="project" value="SGD"/>
</dbReference>
<dbReference type="FunFam" id="2.30.29.70:FF:000003">
    <property type="entry name" value="Regulatory particle non-ATPase"/>
    <property type="match status" value="1"/>
</dbReference>
<dbReference type="Gene3D" id="2.30.29.70">
    <property type="entry name" value="Proteasomal ubiquitin receptor Rpn13/ADRM1"/>
    <property type="match status" value="1"/>
</dbReference>
<dbReference type="InterPro" id="IPR006773">
    <property type="entry name" value="Rpn13/ADRM1"/>
</dbReference>
<dbReference type="InterPro" id="IPR044868">
    <property type="entry name" value="Rpn13/ADRM1_Pru"/>
</dbReference>
<dbReference type="InterPro" id="IPR038633">
    <property type="entry name" value="Rpn13/ADRM1_Pru_sf"/>
</dbReference>
<dbReference type="PANTHER" id="PTHR12225">
    <property type="entry name" value="ADHESION REGULATING MOLECULE 1 110 KDA CELL MEMBRANE GLYCOPROTEIN"/>
    <property type="match status" value="1"/>
</dbReference>
<dbReference type="PANTHER" id="PTHR12225:SF0">
    <property type="entry name" value="PROTEASOMAL UBIQUITIN RECEPTOR ADRM1"/>
    <property type="match status" value="1"/>
</dbReference>
<dbReference type="Pfam" id="PF04683">
    <property type="entry name" value="Rpn13_ADRM1_Pru"/>
    <property type="match status" value="1"/>
</dbReference>
<dbReference type="PROSITE" id="PS51917">
    <property type="entry name" value="PRU"/>
    <property type="match status" value="1"/>
</dbReference>
<protein>
    <recommendedName>
        <fullName>26S proteasome regulatory subunit RPN13</fullName>
    </recommendedName>
    <alternativeName>
        <fullName>Proteasome non-ATPase subunit 13</fullName>
    </alternativeName>
</protein>
<keyword id="KW-0002">3D-structure</keyword>
<keyword id="KW-0007">Acetylation</keyword>
<keyword id="KW-0024">Alternative initiation</keyword>
<keyword id="KW-0963">Cytoplasm</keyword>
<keyword id="KW-0539">Nucleus</keyword>
<keyword id="KW-0597">Phosphoprotein</keyword>
<keyword id="KW-0647">Proteasome</keyword>
<keyword id="KW-1185">Reference proteome</keyword>
<sequence length="156" mass="17902">MSMSSTVIKFRAGVCEYNEDSRLCTPIPVQGEIEIKPNEEEELGFWDFEWRPTEKPVGRELDPISLILIPGETMWVPIKSSKSGRIFALVFSSNERYFFWLQEKNSGNLPLNELSAKDKEIYNKMIGVLNNSSESDEEESNDEKQKAQDVDVSMQD</sequence>
<comment type="function">
    <text evidence="3 6">Component of the 19S cap proteasome complex which acts as a regulatory subunit of the 26S proteasome, involved in the ATP-dependent degradation of ubiquitinated proteins.</text>
</comment>
<comment type="subunit">
    <text evidence="3">Component of the 19S cap proteasome complex composed of at least RPN1, RPN2, RPN3, RPN4, RPN5, RPN6, RPN7, RPN8, RPN9, RPN10, RPN11, RPN12, RPN13, RPT1, RPT2, RPT3, RPT4, RPT5, and RPT6. The 19S subcomplex associates with the 20S proteasome subcomplex to form the functional 26S proteasome.</text>
</comment>
<comment type="interaction">
    <interactant intactId="EBI-32948">
        <id>O13563</id>
    </interactant>
    <interactant intactId="EBI-6174">
        <id>P48510</id>
        <label>DSK2</label>
    </interactant>
    <organismsDiffer>false</organismsDiffer>
    <experiments>8</experiments>
</comment>
<comment type="interaction">
    <interactant intactId="EBI-32948">
        <id>O13563</id>
    </interactant>
    <interactant intactId="EBI-15919">
        <id>P32565</id>
        <label>RPN2</label>
    </interactant>
    <organismsDiffer>false</organismsDiffer>
    <experiments>3</experiments>
</comment>
<comment type="subcellular location">
    <subcellularLocation>
        <location evidence="4">Cytoplasm</location>
    </subcellularLocation>
    <subcellularLocation>
        <location evidence="4">Nucleus</location>
    </subcellularLocation>
</comment>
<comment type="alternative products">
    <event type="alternative initiation"/>
    <isoform>
        <id>O13563-1</id>
        <name>1</name>
        <sequence type="displayed"/>
    </isoform>
    <isoform>
        <id>O13563-2</id>
        <name>2</name>
        <sequence type="described" ref="VSP_058121"/>
    </isoform>
</comment>
<comment type="miscellaneous">
    <text evidence="5">Present with 12200 molecules/cell in log phase SD medium.</text>
</comment>
<comment type="similarity">
    <text evidence="7">Belongs to the RPN13 family.</text>
</comment>
<gene>
    <name type="primary">RPN13</name>
    <name type="synonym">DAQ1</name>
    <name type="ordered locus">YLR421C</name>
</gene>
<proteinExistence type="evidence at protein level"/>
<evidence type="ECO:0000255" key="1">
    <source>
        <dbReference type="PROSITE-ProRule" id="PRU01265"/>
    </source>
</evidence>
<evidence type="ECO:0000256" key="2">
    <source>
        <dbReference type="SAM" id="MobiDB-lite"/>
    </source>
</evidence>
<evidence type="ECO:0000269" key="3">
    <source>
    </source>
</evidence>
<evidence type="ECO:0000269" key="4">
    <source>
    </source>
</evidence>
<evidence type="ECO:0000269" key="5">
    <source>
    </source>
</evidence>
<evidence type="ECO:0000269" key="6">
    <source>
    </source>
</evidence>
<evidence type="ECO:0000305" key="7"/>
<evidence type="ECO:0007744" key="8">
    <source>
    </source>
</evidence>
<evidence type="ECO:0007744" key="9">
    <source>
    </source>
</evidence>
<evidence type="ECO:0007744" key="10">
    <source>
    </source>
</evidence>
<evidence type="ECO:0007744" key="11">
    <source>
    </source>
</evidence>
<evidence type="ECO:0007829" key="12">
    <source>
        <dbReference type="PDB" id="2Z4D"/>
    </source>
</evidence>
<feature type="initiator methionine" description="Removed" evidence="11">
    <location>
        <position position="1"/>
    </location>
</feature>
<feature type="chain" id="PRO_0000268704" description="26S proteasome regulatory subunit RPN13">
    <location>
        <begin position="2"/>
        <end position="156"/>
    </location>
</feature>
<feature type="domain" description="Pru" evidence="1">
    <location>
        <begin position="2"/>
        <end position="132"/>
    </location>
</feature>
<feature type="region of interest" description="Disordered" evidence="2">
    <location>
        <begin position="128"/>
        <end position="156"/>
    </location>
</feature>
<feature type="modified residue" description="N-acetylserine" evidence="11">
    <location>
        <position position="2"/>
    </location>
</feature>
<feature type="modified residue" description="Phosphoserine" evidence="10">
    <location>
        <position position="133"/>
    </location>
</feature>
<feature type="modified residue" description="Phosphoserine" evidence="8 9 10">
    <location>
        <position position="135"/>
    </location>
</feature>
<feature type="modified residue" description="Phosphoserine" evidence="8 9 10">
    <location>
        <position position="140"/>
    </location>
</feature>
<feature type="splice variant" id="VSP_058121" description="In isoform 2." evidence="7">
    <location>
        <begin position="1"/>
        <end position="2"/>
    </location>
</feature>
<feature type="strand" evidence="12">
    <location>
        <begin position="8"/>
        <end position="10"/>
    </location>
</feature>
<feature type="strand" evidence="12">
    <location>
        <begin position="15"/>
        <end position="18"/>
    </location>
</feature>
<feature type="turn" evidence="12">
    <location>
        <begin position="19"/>
        <end position="22"/>
    </location>
</feature>
<feature type="strand" evidence="12">
    <location>
        <begin position="23"/>
        <end position="26"/>
    </location>
</feature>
<feature type="strand" evidence="12">
    <location>
        <begin position="32"/>
        <end position="37"/>
    </location>
</feature>
<feature type="turn" evidence="12">
    <location>
        <begin position="38"/>
        <end position="40"/>
    </location>
</feature>
<feature type="strand" evidence="12">
    <location>
        <begin position="41"/>
        <end position="43"/>
    </location>
</feature>
<feature type="strand" evidence="12">
    <location>
        <begin position="46"/>
        <end position="52"/>
    </location>
</feature>
<feature type="strand" evidence="12">
    <location>
        <begin position="64"/>
        <end position="66"/>
    </location>
</feature>
<feature type="turn" evidence="12">
    <location>
        <begin position="70"/>
        <end position="72"/>
    </location>
</feature>
<feature type="strand" evidence="12">
    <location>
        <begin position="73"/>
        <end position="77"/>
    </location>
</feature>
<feature type="strand" evidence="12">
    <location>
        <begin position="80"/>
        <end position="82"/>
    </location>
</feature>
<feature type="strand" evidence="12">
    <location>
        <begin position="86"/>
        <end position="90"/>
    </location>
</feature>
<feature type="strand" evidence="12">
    <location>
        <begin position="92"/>
        <end position="94"/>
    </location>
</feature>
<feature type="strand" evidence="12">
    <location>
        <begin position="97"/>
        <end position="100"/>
    </location>
</feature>
<feature type="initiator methionine" description="Removed" evidence="11">
    <location sequence="O13563-2">
        <position position="1"/>
    </location>
</feature>
<feature type="modified residue" description="N-acetylserine" evidence="11">
    <location sequence="O13563-2">
        <position position="2"/>
    </location>
</feature>
<organism>
    <name type="scientific">Saccharomyces cerevisiae (strain ATCC 204508 / S288c)</name>
    <name type="common">Baker's yeast</name>
    <dbReference type="NCBI Taxonomy" id="559292"/>
    <lineage>
        <taxon>Eukaryota</taxon>
        <taxon>Fungi</taxon>
        <taxon>Dikarya</taxon>
        <taxon>Ascomycota</taxon>
        <taxon>Saccharomycotina</taxon>
        <taxon>Saccharomycetes</taxon>
        <taxon>Saccharomycetales</taxon>
        <taxon>Saccharomycetaceae</taxon>
        <taxon>Saccharomyces</taxon>
    </lineage>
</organism>
<name>RPN13_YEAST</name>
<accession>O13563</accession>
<accession>D6VZ57</accession>
<reference key="1">
    <citation type="journal article" date="1997" name="Nature">
        <title>The nucleotide sequence of Saccharomyces cerevisiae chromosome XII.</title>
        <authorList>
            <person name="Johnston M."/>
            <person name="Hillier L.W."/>
            <person name="Riles L."/>
            <person name="Albermann K."/>
            <person name="Andre B."/>
            <person name="Ansorge W."/>
            <person name="Benes V."/>
            <person name="Brueckner M."/>
            <person name="Delius H."/>
            <person name="Dubois E."/>
            <person name="Duesterhoeft A."/>
            <person name="Entian K.-D."/>
            <person name="Floeth M."/>
            <person name="Goffeau A."/>
            <person name="Hebling U."/>
            <person name="Heumann K."/>
            <person name="Heuss-Neitzel D."/>
            <person name="Hilbert H."/>
            <person name="Hilger F."/>
            <person name="Kleine K."/>
            <person name="Koetter P."/>
            <person name="Louis E.J."/>
            <person name="Messenguy F."/>
            <person name="Mewes H.-W."/>
            <person name="Miosga T."/>
            <person name="Moestl D."/>
            <person name="Mueller-Auer S."/>
            <person name="Nentwich U."/>
            <person name="Obermaier B."/>
            <person name="Piravandi E."/>
            <person name="Pohl T.M."/>
            <person name="Portetelle D."/>
            <person name="Purnelle B."/>
            <person name="Rechmann S."/>
            <person name="Rieger M."/>
            <person name="Rinke M."/>
            <person name="Rose M."/>
            <person name="Scharfe M."/>
            <person name="Scherens B."/>
            <person name="Scholler P."/>
            <person name="Schwager C."/>
            <person name="Schwarz S."/>
            <person name="Underwood A.P."/>
            <person name="Urrestarazu L.A."/>
            <person name="Vandenbol M."/>
            <person name="Verhasselt P."/>
            <person name="Vierendeels F."/>
            <person name="Voet M."/>
            <person name="Volckaert G."/>
            <person name="Voss H."/>
            <person name="Wambutt R."/>
            <person name="Wedler E."/>
            <person name="Wedler H."/>
            <person name="Zimmermann F.K."/>
            <person name="Zollner A."/>
            <person name="Hani J."/>
            <person name="Hoheisel J.D."/>
        </authorList>
    </citation>
    <scope>NUCLEOTIDE SEQUENCE [LARGE SCALE GENOMIC DNA]</scope>
    <source>
        <strain>ATCC 204508 / S288c</strain>
    </source>
</reference>
<reference key="2">
    <citation type="journal article" date="2014" name="G3 (Bethesda)">
        <title>The reference genome sequence of Saccharomyces cerevisiae: Then and now.</title>
        <authorList>
            <person name="Engel S.R."/>
            <person name="Dietrich F.S."/>
            <person name="Fisk D.G."/>
            <person name="Binkley G."/>
            <person name="Balakrishnan R."/>
            <person name="Costanzo M.C."/>
            <person name="Dwight S.S."/>
            <person name="Hitz B.C."/>
            <person name="Karra K."/>
            <person name="Nash R.S."/>
            <person name="Weng S."/>
            <person name="Wong E.D."/>
            <person name="Lloyd P."/>
            <person name="Skrzypek M.S."/>
            <person name="Miyasato S.R."/>
            <person name="Simison M."/>
            <person name="Cherry J.M."/>
        </authorList>
    </citation>
    <scope>GENOME REANNOTATION</scope>
    <source>
        <strain>ATCC 204508 / S288c</strain>
    </source>
</reference>
<reference key="3">
    <citation type="journal article" date="2007" name="Genome Res.">
        <title>Approaching a complete repository of sequence-verified protein-encoding clones for Saccharomyces cerevisiae.</title>
        <authorList>
            <person name="Hu Y."/>
            <person name="Rolfs A."/>
            <person name="Bhullar B."/>
            <person name="Murthy T.V.S."/>
            <person name="Zhu C."/>
            <person name="Berger M.F."/>
            <person name="Camargo A.A."/>
            <person name="Kelley F."/>
            <person name="McCarron S."/>
            <person name="Jepson D."/>
            <person name="Richardson A."/>
            <person name="Raphael J."/>
            <person name="Moreira D."/>
            <person name="Taycher E."/>
            <person name="Zuo D."/>
            <person name="Mohr S."/>
            <person name="Kane M.F."/>
            <person name="Williamson J."/>
            <person name="Simpson A.J.G."/>
            <person name="Bulyk M.L."/>
            <person name="Harlow E."/>
            <person name="Marsischky G."/>
            <person name="Kolodner R.D."/>
            <person name="LaBaer J."/>
        </authorList>
    </citation>
    <scope>NUCLEOTIDE SEQUENCE [GENOMIC DNA]</scope>
    <source>
        <strain>ATCC 204508 / S288c</strain>
    </source>
</reference>
<reference key="4">
    <citation type="journal article" date="1994" name="FEBS Lett.">
        <title>The 26S proteasome of the yeast Saccharomyces cerevisiae.</title>
        <authorList>
            <person name="Fischer M."/>
            <person name="Hilt W."/>
            <person name="Richter-Ruoff B."/>
            <person name="Gonen H."/>
            <person name="Ciechanover A."/>
            <person name="Wolf D.H."/>
        </authorList>
    </citation>
    <scope>FUNCTION OF THE 26S PROTEASOME</scope>
</reference>
<reference key="5">
    <citation type="journal article" date="2000" name="Mol. Biol. Cell">
        <title>Proteasomal proteomics: identification of nucleotide-sensitive proteasome-interacting proteins by mass spectrometric analysis of affinity-purified proteasomes.</title>
        <authorList>
            <person name="Verma R."/>
            <person name="Chen S."/>
            <person name="Feldman R."/>
            <person name="Schieltz D."/>
            <person name="Yates J."/>
            <person name="Dohmen J."/>
            <person name="Deshaies R.J."/>
        </authorList>
    </citation>
    <scope>IDENTIFICATION IN THE 19S AND 26S PROTEASOMES</scope>
    <scope>FUNCTION OF THE 26S PROTEASOME</scope>
    <scope>IDENTIFICATION BY MASS SPECTROMETRY</scope>
</reference>
<reference key="6">
    <citation type="journal article" date="2003" name="Nature">
        <title>Global analysis of protein localization in budding yeast.</title>
        <authorList>
            <person name="Huh W.-K."/>
            <person name="Falvo J.V."/>
            <person name="Gerke L.C."/>
            <person name="Carroll A.S."/>
            <person name="Howson R.W."/>
            <person name="Weissman J.S."/>
            <person name="O'Shea E.K."/>
        </authorList>
    </citation>
    <scope>SUBCELLULAR LOCATION [LARGE SCALE ANALYSIS]</scope>
</reference>
<reference key="7">
    <citation type="journal article" date="2003" name="Nature">
        <title>Global analysis of protein expression in yeast.</title>
        <authorList>
            <person name="Ghaemmaghami S."/>
            <person name="Huh W.-K."/>
            <person name="Bower K."/>
            <person name="Howson R.W."/>
            <person name="Belle A."/>
            <person name="Dephoure N."/>
            <person name="O'Shea E.K."/>
            <person name="Weissman J.S."/>
        </authorList>
    </citation>
    <scope>LEVEL OF PROTEIN EXPRESSION [LARGE SCALE ANALYSIS]</scope>
</reference>
<reference key="8">
    <citation type="journal article" date="2007" name="J. Proteome Res.">
        <title>Large-scale phosphorylation analysis of alpha-factor-arrested Saccharomyces cerevisiae.</title>
        <authorList>
            <person name="Li X."/>
            <person name="Gerber S.A."/>
            <person name="Rudner A.D."/>
            <person name="Beausoleil S.A."/>
            <person name="Haas W."/>
            <person name="Villen J."/>
            <person name="Elias J.E."/>
            <person name="Gygi S.P."/>
        </authorList>
    </citation>
    <scope>PHOSPHORYLATION [LARGE SCALE ANALYSIS] AT SER-135 AND SER-140</scope>
    <scope>IDENTIFICATION BY MASS SPECTROMETRY [LARGE SCALE ANALYSIS]</scope>
    <source>
        <strain>ADR376</strain>
    </source>
</reference>
<reference key="9">
    <citation type="journal article" date="2008" name="Mol. Cell. Proteomics">
        <title>A multidimensional chromatography technology for in-depth phosphoproteome analysis.</title>
        <authorList>
            <person name="Albuquerque C.P."/>
            <person name="Smolka M.B."/>
            <person name="Payne S.H."/>
            <person name="Bafna V."/>
            <person name="Eng J."/>
            <person name="Zhou H."/>
        </authorList>
    </citation>
    <scope>PHOSPHORYLATION [LARGE SCALE ANALYSIS] AT SER-135 AND SER-140</scope>
    <scope>IDENTIFICATION BY MASS SPECTROMETRY [LARGE SCALE ANALYSIS]</scope>
</reference>
<reference key="10">
    <citation type="journal article" date="2009" name="Science">
        <title>Global analysis of Cdk1 substrate phosphorylation sites provides insights into evolution.</title>
        <authorList>
            <person name="Holt L.J."/>
            <person name="Tuch B.B."/>
            <person name="Villen J."/>
            <person name="Johnson A.D."/>
            <person name="Gygi S.P."/>
            <person name="Morgan D.O."/>
        </authorList>
    </citation>
    <scope>PHOSPHORYLATION [LARGE SCALE ANALYSIS] AT SER-133; SER-135 AND SER-140</scope>
    <scope>IDENTIFICATION BY MASS SPECTROMETRY [LARGE SCALE ANALYSIS]</scope>
</reference>
<reference key="11">
    <citation type="journal article" date="2012" name="Proc. Natl. Acad. Sci. U.S.A.">
        <title>N-terminal acetylome analyses and functional insights of the N-terminal acetyltransferase NatB.</title>
        <authorList>
            <person name="Van Damme P."/>
            <person name="Lasa M."/>
            <person name="Polevoda B."/>
            <person name="Gazquez C."/>
            <person name="Elosegui-Artola A."/>
            <person name="Kim D.S."/>
            <person name="De Juan-Pardo E."/>
            <person name="Demeyer K."/>
            <person name="Hole K."/>
            <person name="Larrea E."/>
            <person name="Timmerman E."/>
            <person name="Prieto J."/>
            <person name="Arnesen T."/>
            <person name="Sherman F."/>
            <person name="Gevaert K."/>
            <person name="Aldabe R."/>
        </authorList>
    </citation>
    <scope>ACETYLATION [LARGE SCALE ANALYSIS] AT SER-2</scope>
    <scope>ACETYLATION [LARGE SCALE ANALYSIS] AT SER-2 (ISOFORM 2)</scope>
    <scope>CLEAVAGE OF INITIATOR METHIONINE [LARGE SCALE ANALYSIS]</scope>
    <scope>CLEAVAGE OF INITIATOR METHIONINE [LARGE SCALE ANALYSIS] (ISOFORM 2)</scope>
    <scope>IDENTIFICATION BY MASS SPECTROMETRY [LARGE SCALE ANALYSIS]</scope>
</reference>
<reference key="12">
    <citation type="journal article" date="2012" name="Proc. Natl. Acad. Sci. U.S.A.">
        <title>Near-atomic resolution structural model of the yeast 26S proteasome.</title>
        <authorList>
            <person name="Beck F."/>
            <person name="Unverdorben P."/>
            <person name="Bohn S."/>
            <person name="Schweitzer A."/>
            <person name="Pfeifer G."/>
            <person name="Sakata E."/>
            <person name="Nickell S."/>
            <person name="Plitzko J.M."/>
            <person name="Villa E."/>
            <person name="Baumeister W."/>
            <person name="Forster F."/>
        </authorList>
    </citation>
    <scope>STRUCTURE BY ELECTRON MICROSCOPY (7.4 ANGSTROMS) OF THE 26S PROTEASOME</scope>
</reference>